<keyword id="KW-0028">Amino-acid biosynthesis</keyword>
<keyword id="KW-0067">ATP-binding</keyword>
<keyword id="KW-0963">Cytoplasm</keyword>
<keyword id="KW-0418">Kinase</keyword>
<keyword id="KW-0547">Nucleotide-binding</keyword>
<keyword id="KW-1185">Reference proteome</keyword>
<keyword id="KW-0791">Threonine biosynthesis</keyword>
<keyword id="KW-0808">Transferase</keyword>
<protein>
    <recommendedName>
        <fullName evidence="1">Homoserine kinase</fullName>
        <shortName evidence="1">HK</shortName>
        <shortName evidence="1">HSK</shortName>
        <ecNumber evidence="1">2.7.1.39</ecNumber>
    </recommendedName>
</protein>
<reference key="1">
    <citation type="journal article" date="2002" name="Proc. Natl. Acad. Sci. U.S.A.">
        <title>Genome sequence of Streptococcus mutans UA159, a cariogenic dental pathogen.</title>
        <authorList>
            <person name="Ajdic D.J."/>
            <person name="McShan W.M."/>
            <person name="McLaughlin R.E."/>
            <person name="Savic G."/>
            <person name="Chang J."/>
            <person name="Carson M.B."/>
            <person name="Primeaux C."/>
            <person name="Tian R."/>
            <person name="Kenton S."/>
            <person name="Jia H.G."/>
            <person name="Lin S.P."/>
            <person name="Qian Y."/>
            <person name="Li S."/>
            <person name="Zhu H."/>
            <person name="Najar F.Z."/>
            <person name="Lai H."/>
            <person name="White J."/>
            <person name="Roe B.A."/>
            <person name="Ferretti J.J."/>
        </authorList>
    </citation>
    <scope>NUCLEOTIDE SEQUENCE [LARGE SCALE GENOMIC DNA]</scope>
    <source>
        <strain>ATCC 700610 / UA159</strain>
    </source>
</reference>
<evidence type="ECO:0000255" key="1">
    <source>
        <dbReference type="HAMAP-Rule" id="MF_00384"/>
    </source>
</evidence>
<sequence>MKITVPATSANIGPGFDSVGVALSKYLSIEVLEEAASWHISHDLGDIPSDEHNLLLVTALKVAPDLRPHRLRMVSDIPLARGLGSSSSVIVAGIELANQLADLNLTDSEKLDIATEIEGHPDNVAPALFGNLVISSYINQKVNYVVADFPKSSFIAFIPNYELKTSDSRDVLPTDLTYKEAVAASSIANVAIAGLLTGDLKTAGEAIMNDRFHERFRQSLVREFAQIKEIGKRNGAYASYLSGAGPTVIVLTDQDKADQIKADIDALELSGSTHLLRIDAKGVRVEKN</sequence>
<organism>
    <name type="scientific">Streptococcus mutans serotype c (strain ATCC 700610 / UA159)</name>
    <dbReference type="NCBI Taxonomy" id="210007"/>
    <lineage>
        <taxon>Bacteria</taxon>
        <taxon>Bacillati</taxon>
        <taxon>Bacillota</taxon>
        <taxon>Bacilli</taxon>
        <taxon>Lactobacillales</taxon>
        <taxon>Streptococcaceae</taxon>
        <taxon>Streptococcus</taxon>
    </lineage>
</organism>
<accession>Q8DUG4</accession>
<comment type="function">
    <text evidence="1">Catalyzes the ATP-dependent phosphorylation of L-homoserine to L-homoserine phosphate.</text>
</comment>
<comment type="catalytic activity">
    <reaction evidence="1">
        <text>L-homoserine + ATP = O-phospho-L-homoserine + ADP + H(+)</text>
        <dbReference type="Rhea" id="RHEA:13985"/>
        <dbReference type="ChEBI" id="CHEBI:15378"/>
        <dbReference type="ChEBI" id="CHEBI:30616"/>
        <dbReference type="ChEBI" id="CHEBI:57476"/>
        <dbReference type="ChEBI" id="CHEBI:57590"/>
        <dbReference type="ChEBI" id="CHEBI:456216"/>
        <dbReference type="EC" id="2.7.1.39"/>
    </reaction>
</comment>
<comment type="pathway">
    <text evidence="1">Amino-acid biosynthesis; L-threonine biosynthesis; L-threonine from L-aspartate: step 4/5.</text>
</comment>
<comment type="subcellular location">
    <subcellularLocation>
        <location evidence="1">Cytoplasm</location>
    </subcellularLocation>
</comment>
<comment type="similarity">
    <text evidence="1">Belongs to the GHMP kinase family. Homoserine kinase subfamily.</text>
</comment>
<feature type="chain" id="PRO_0000156618" description="Homoserine kinase">
    <location>
        <begin position="1"/>
        <end position="288"/>
    </location>
</feature>
<feature type="binding site" evidence="1">
    <location>
        <begin position="78"/>
        <end position="88"/>
    </location>
    <ligand>
        <name>ATP</name>
        <dbReference type="ChEBI" id="CHEBI:30616"/>
    </ligand>
</feature>
<proteinExistence type="inferred from homology"/>
<name>KHSE_STRMU</name>
<dbReference type="EC" id="2.7.1.39" evidence="1"/>
<dbReference type="EMBL" id="AE014133">
    <property type="protein sequence ID" value="AAN58669.1"/>
    <property type="molecule type" value="Genomic_DNA"/>
</dbReference>
<dbReference type="RefSeq" id="NP_721363.1">
    <property type="nucleotide sequence ID" value="NC_004350.2"/>
</dbReference>
<dbReference type="RefSeq" id="WP_002262830.1">
    <property type="nucleotide sequence ID" value="NC_004350.2"/>
</dbReference>
<dbReference type="SMR" id="Q8DUG4"/>
<dbReference type="STRING" id="210007.SMU_966"/>
<dbReference type="KEGG" id="smu:SMU_966"/>
<dbReference type="PATRIC" id="fig|210007.7.peg.860"/>
<dbReference type="eggNOG" id="COG0083">
    <property type="taxonomic scope" value="Bacteria"/>
</dbReference>
<dbReference type="HOGENOM" id="CLU_041243_0_0_9"/>
<dbReference type="OrthoDB" id="9769912at2"/>
<dbReference type="PhylomeDB" id="Q8DUG4"/>
<dbReference type="UniPathway" id="UPA00050">
    <property type="reaction ID" value="UER00064"/>
</dbReference>
<dbReference type="Proteomes" id="UP000002512">
    <property type="component" value="Chromosome"/>
</dbReference>
<dbReference type="GO" id="GO:0005737">
    <property type="term" value="C:cytoplasm"/>
    <property type="evidence" value="ECO:0007669"/>
    <property type="project" value="UniProtKB-SubCell"/>
</dbReference>
<dbReference type="GO" id="GO:0005524">
    <property type="term" value="F:ATP binding"/>
    <property type="evidence" value="ECO:0007669"/>
    <property type="project" value="UniProtKB-UniRule"/>
</dbReference>
<dbReference type="GO" id="GO:0004413">
    <property type="term" value="F:homoserine kinase activity"/>
    <property type="evidence" value="ECO:0007669"/>
    <property type="project" value="UniProtKB-UniRule"/>
</dbReference>
<dbReference type="GO" id="GO:0009088">
    <property type="term" value="P:threonine biosynthetic process"/>
    <property type="evidence" value="ECO:0007669"/>
    <property type="project" value="UniProtKB-UniRule"/>
</dbReference>
<dbReference type="Gene3D" id="3.30.230.10">
    <property type="match status" value="1"/>
</dbReference>
<dbReference type="Gene3D" id="3.30.70.890">
    <property type="entry name" value="GHMP kinase, C-terminal domain"/>
    <property type="match status" value="1"/>
</dbReference>
<dbReference type="HAMAP" id="MF_00384">
    <property type="entry name" value="Homoser_kinase"/>
    <property type="match status" value="1"/>
</dbReference>
<dbReference type="InterPro" id="IPR013750">
    <property type="entry name" value="GHMP_kinase_C_dom"/>
</dbReference>
<dbReference type="InterPro" id="IPR036554">
    <property type="entry name" value="GHMP_kinase_C_sf"/>
</dbReference>
<dbReference type="InterPro" id="IPR006204">
    <property type="entry name" value="GHMP_kinase_N_dom"/>
</dbReference>
<dbReference type="InterPro" id="IPR006203">
    <property type="entry name" value="GHMP_knse_ATP-bd_CS"/>
</dbReference>
<dbReference type="InterPro" id="IPR000870">
    <property type="entry name" value="Homoserine_kinase"/>
</dbReference>
<dbReference type="InterPro" id="IPR020568">
    <property type="entry name" value="Ribosomal_Su5_D2-typ_SF"/>
</dbReference>
<dbReference type="InterPro" id="IPR014721">
    <property type="entry name" value="Ribsml_uS5_D2-typ_fold_subgr"/>
</dbReference>
<dbReference type="NCBIfam" id="TIGR00191">
    <property type="entry name" value="thrB"/>
    <property type="match status" value="1"/>
</dbReference>
<dbReference type="PANTHER" id="PTHR20861:SF1">
    <property type="entry name" value="HOMOSERINE KINASE"/>
    <property type="match status" value="1"/>
</dbReference>
<dbReference type="PANTHER" id="PTHR20861">
    <property type="entry name" value="HOMOSERINE/4-DIPHOSPHOCYTIDYL-2-C-METHYL-D-ERYTHRITOL KINASE"/>
    <property type="match status" value="1"/>
</dbReference>
<dbReference type="Pfam" id="PF08544">
    <property type="entry name" value="GHMP_kinases_C"/>
    <property type="match status" value="1"/>
</dbReference>
<dbReference type="Pfam" id="PF00288">
    <property type="entry name" value="GHMP_kinases_N"/>
    <property type="match status" value="1"/>
</dbReference>
<dbReference type="PIRSF" id="PIRSF000676">
    <property type="entry name" value="Homoser_kin"/>
    <property type="match status" value="1"/>
</dbReference>
<dbReference type="PRINTS" id="PR00958">
    <property type="entry name" value="HOMSERKINASE"/>
</dbReference>
<dbReference type="SUPFAM" id="SSF55060">
    <property type="entry name" value="GHMP Kinase, C-terminal domain"/>
    <property type="match status" value="1"/>
</dbReference>
<dbReference type="SUPFAM" id="SSF54211">
    <property type="entry name" value="Ribosomal protein S5 domain 2-like"/>
    <property type="match status" value="1"/>
</dbReference>
<dbReference type="PROSITE" id="PS00627">
    <property type="entry name" value="GHMP_KINASES_ATP"/>
    <property type="match status" value="1"/>
</dbReference>
<gene>
    <name evidence="1" type="primary">thrB</name>
    <name type="ordered locus">SMU_966</name>
</gene>